<name>CLPS2_RHOPA</name>
<sequence length="109" mass="12369">MAGDGGRSGPSTPSTSVITKTKPRTKRPNLYRVLILNDDYTPMEFVVHVLEKFFQMDVEAATKVMLHVHHHGIGECGVFTYEIAETKVTQVMDFARKHQHPLQCVMEKK</sequence>
<proteinExistence type="inferred from homology"/>
<reference key="1">
    <citation type="journal article" date="2004" name="Nat. Biotechnol.">
        <title>Complete genome sequence of the metabolically versatile photosynthetic bacterium Rhodopseudomonas palustris.</title>
        <authorList>
            <person name="Larimer F.W."/>
            <person name="Chain P."/>
            <person name="Hauser L."/>
            <person name="Lamerdin J.E."/>
            <person name="Malfatti S."/>
            <person name="Do L."/>
            <person name="Land M.L."/>
            <person name="Pelletier D.A."/>
            <person name="Beatty J.T."/>
            <person name="Lang A.S."/>
            <person name="Tabita F.R."/>
            <person name="Gibson J.L."/>
            <person name="Hanson T.E."/>
            <person name="Bobst C."/>
            <person name="Torres y Torres J.L."/>
            <person name="Peres C."/>
            <person name="Harrison F.H."/>
            <person name="Gibson J."/>
            <person name="Harwood C.S."/>
        </authorList>
    </citation>
    <scope>NUCLEOTIDE SEQUENCE [LARGE SCALE GENOMIC DNA]</scope>
    <source>
        <strain>ATCC BAA-98 / CGA009</strain>
    </source>
</reference>
<comment type="function">
    <text evidence="1">Involved in the modulation of the specificity of the ClpAP-mediated ATP-dependent protein degradation.</text>
</comment>
<comment type="subunit">
    <text evidence="1">Binds to the N-terminal domain of the chaperone ClpA.</text>
</comment>
<comment type="similarity">
    <text evidence="1">Belongs to the ClpS family.</text>
</comment>
<comment type="sequence caution" evidence="3">
    <conflict type="erroneous initiation">
        <sequence resource="EMBL-CDS" id="CAE28589"/>
    </conflict>
</comment>
<evidence type="ECO:0000255" key="1">
    <source>
        <dbReference type="HAMAP-Rule" id="MF_00302"/>
    </source>
</evidence>
<evidence type="ECO:0000256" key="2">
    <source>
        <dbReference type="SAM" id="MobiDB-lite"/>
    </source>
</evidence>
<evidence type="ECO:0000305" key="3"/>
<dbReference type="EMBL" id="BX572603">
    <property type="protein sequence ID" value="CAE28589.1"/>
    <property type="status" value="ALT_INIT"/>
    <property type="molecule type" value="Genomic_DNA"/>
</dbReference>
<dbReference type="SMR" id="Q6N535"/>
<dbReference type="STRING" id="258594.RPA3148"/>
<dbReference type="eggNOG" id="COG2127">
    <property type="taxonomic scope" value="Bacteria"/>
</dbReference>
<dbReference type="HOGENOM" id="CLU_134358_0_0_5"/>
<dbReference type="PhylomeDB" id="Q6N535"/>
<dbReference type="GO" id="GO:0030163">
    <property type="term" value="P:protein catabolic process"/>
    <property type="evidence" value="ECO:0007669"/>
    <property type="project" value="InterPro"/>
</dbReference>
<dbReference type="GO" id="GO:0006508">
    <property type="term" value="P:proteolysis"/>
    <property type="evidence" value="ECO:0007669"/>
    <property type="project" value="UniProtKB-UniRule"/>
</dbReference>
<dbReference type="FunFam" id="3.30.1390.10:FF:000002">
    <property type="entry name" value="ATP-dependent Clp protease adapter protein ClpS"/>
    <property type="match status" value="1"/>
</dbReference>
<dbReference type="Gene3D" id="3.30.1390.10">
    <property type="match status" value="1"/>
</dbReference>
<dbReference type="HAMAP" id="MF_00302">
    <property type="entry name" value="ClpS"/>
    <property type="match status" value="1"/>
</dbReference>
<dbReference type="InterPro" id="IPR022935">
    <property type="entry name" value="ClpS"/>
</dbReference>
<dbReference type="InterPro" id="IPR003769">
    <property type="entry name" value="ClpS_core"/>
</dbReference>
<dbReference type="InterPro" id="IPR014719">
    <property type="entry name" value="Ribosomal_bL12_C/ClpS-like"/>
</dbReference>
<dbReference type="NCBIfam" id="NF000669">
    <property type="entry name" value="PRK00033.1-2"/>
    <property type="match status" value="1"/>
</dbReference>
<dbReference type="NCBIfam" id="NF000672">
    <property type="entry name" value="PRK00033.1-5"/>
    <property type="match status" value="1"/>
</dbReference>
<dbReference type="PANTHER" id="PTHR33473:SF19">
    <property type="entry name" value="ATP-DEPENDENT CLP PROTEASE ADAPTER PROTEIN CLPS"/>
    <property type="match status" value="1"/>
</dbReference>
<dbReference type="PANTHER" id="PTHR33473">
    <property type="entry name" value="ATP-DEPENDENT CLP PROTEASE ADAPTER PROTEIN CLPS1, CHLOROPLASTIC"/>
    <property type="match status" value="1"/>
</dbReference>
<dbReference type="Pfam" id="PF02617">
    <property type="entry name" value="ClpS"/>
    <property type="match status" value="1"/>
</dbReference>
<dbReference type="SUPFAM" id="SSF54736">
    <property type="entry name" value="ClpS-like"/>
    <property type="match status" value="1"/>
</dbReference>
<protein>
    <recommendedName>
        <fullName evidence="1">ATP-dependent Clp protease adapter protein ClpS 2</fullName>
    </recommendedName>
</protein>
<accession>Q6N535</accession>
<organism>
    <name type="scientific">Rhodopseudomonas palustris (strain ATCC BAA-98 / CGA009)</name>
    <dbReference type="NCBI Taxonomy" id="258594"/>
    <lineage>
        <taxon>Bacteria</taxon>
        <taxon>Pseudomonadati</taxon>
        <taxon>Pseudomonadota</taxon>
        <taxon>Alphaproteobacteria</taxon>
        <taxon>Hyphomicrobiales</taxon>
        <taxon>Nitrobacteraceae</taxon>
        <taxon>Rhodopseudomonas</taxon>
    </lineage>
</organism>
<feature type="chain" id="PRO_0000215743" description="ATP-dependent Clp protease adapter protein ClpS 2">
    <location>
        <begin position="1"/>
        <end position="109"/>
    </location>
</feature>
<feature type="region of interest" description="Disordered" evidence="2">
    <location>
        <begin position="1"/>
        <end position="24"/>
    </location>
</feature>
<gene>
    <name evidence="1" type="primary">clpS2</name>
    <name type="ordered locus">RPA3148</name>
</gene>